<dbReference type="EC" id="7.1.1.7" evidence="2"/>
<dbReference type="EMBL" id="M77787">
    <property type="protein sequence ID" value="AAA22123.1"/>
    <property type="molecule type" value="Genomic_DNA"/>
</dbReference>
<dbReference type="EMBL" id="S57066">
    <property type="protein sequence ID" value="AAB19986.1"/>
    <property type="molecule type" value="Genomic_DNA"/>
</dbReference>
<dbReference type="PIR" id="A38170">
    <property type="entry name" value="A38170"/>
</dbReference>
<dbReference type="SMR" id="Q09049"/>
<dbReference type="GO" id="GO:0070069">
    <property type="term" value="C:cytochrome complex"/>
    <property type="evidence" value="ECO:0007669"/>
    <property type="project" value="InterPro"/>
</dbReference>
<dbReference type="GO" id="GO:0005886">
    <property type="term" value="C:plasma membrane"/>
    <property type="evidence" value="ECO:0007669"/>
    <property type="project" value="UniProtKB-SubCell"/>
</dbReference>
<dbReference type="GO" id="GO:0009055">
    <property type="term" value="F:electron transfer activity"/>
    <property type="evidence" value="ECO:0007669"/>
    <property type="project" value="InterPro"/>
</dbReference>
<dbReference type="GO" id="GO:0020037">
    <property type="term" value="F:heme binding"/>
    <property type="evidence" value="ECO:0007669"/>
    <property type="project" value="TreeGrafter"/>
</dbReference>
<dbReference type="GO" id="GO:0046872">
    <property type="term" value="F:metal ion binding"/>
    <property type="evidence" value="ECO:0007669"/>
    <property type="project" value="UniProtKB-KW"/>
</dbReference>
<dbReference type="GO" id="GO:0016682">
    <property type="term" value="F:oxidoreductase activity, acting on diphenols and related substances as donors, oxygen as acceptor"/>
    <property type="evidence" value="ECO:0007669"/>
    <property type="project" value="TreeGrafter"/>
</dbReference>
<dbReference type="GO" id="GO:0019646">
    <property type="term" value="P:aerobic electron transport chain"/>
    <property type="evidence" value="ECO:0007669"/>
    <property type="project" value="InterPro"/>
</dbReference>
<dbReference type="InterPro" id="IPR002585">
    <property type="entry name" value="Cyt-d_ubiquinol_oxidase_su_1"/>
</dbReference>
<dbReference type="PANTHER" id="PTHR30365:SF0">
    <property type="entry name" value="CYTOCHROME BD-I UBIQUINOL OXIDASE SUBUNIT 1"/>
    <property type="match status" value="1"/>
</dbReference>
<dbReference type="PANTHER" id="PTHR30365">
    <property type="entry name" value="CYTOCHROME D UBIQUINOL OXIDASE"/>
    <property type="match status" value="1"/>
</dbReference>
<dbReference type="Pfam" id="PF01654">
    <property type="entry name" value="Cyt_bd_oxida_I"/>
    <property type="match status" value="1"/>
</dbReference>
<dbReference type="PIRSF" id="PIRSF006446">
    <property type="entry name" value="Cyt_quinol_oxidase_1"/>
    <property type="match status" value="1"/>
</dbReference>
<reference key="1">
    <citation type="journal article" date="1991" name="J. Bacteriol.">
        <title>Cloning, characterization, and expression in Escherichia coli of the genes encoding the cytochrome d oxidase complex from Azotobacter vinelandii.</title>
        <authorList>
            <person name="Moshiri F."/>
            <person name="Chawla A."/>
            <person name="Maier R.J."/>
        </authorList>
    </citation>
    <scope>NUCLEOTIDE SEQUENCE [GENOMIC DNA]</scope>
    <source>
        <strain>CA</strain>
    </source>
</reference>
<reference key="2">
    <citation type="journal article" date="1991" name="J. Biol. Chem.">
        <title>Transcriptional regulation of cytochrome d in nitrogen-fixing Azotobacter vinelandii. Evidence that up-regulation during N2 fixation is independent of nifA but dependent on ntrA.</title>
        <authorList>
            <person name="Moshiri F."/>
            <person name="Smith E.G."/>
            <person name="Taormino J.P."/>
            <person name="Maier R.J."/>
        </authorList>
    </citation>
    <scope>NUCLEOTIDE SEQUENCE [GENOMIC DNA]</scope>
    <source>
        <strain>CA</strain>
    </source>
</reference>
<reference key="3">
    <citation type="journal article" date="1990" name="J. Bacteriol.">
        <title>Cloning and mutagenesis of genes encoding the cytochrome bd terminal oxidase complex in Azotobacter vinelandii: mutants deficient in the cytochrome d complex are unable to fix nitrogen in air.</title>
        <authorList>
            <person name="Kelly M.J.S."/>
            <person name="Poole R.K."/>
            <person name="Yates M.G."/>
            <person name="Kennedy C."/>
        </authorList>
    </citation>
    <scope>FUNCTION</scope>
</reference>
<keyword id="KW-0997">Cell inner membrane</keyword>
<keyword id="KW-1003">Cell membrane</keyword>
<keyword id="KW-0249">Electron transport</keyword>
<keyword id="KW-0349">Heme</keyword>
<keyword id="KW-0408">Iron</keyword>
<keyword id="KW-0472">Membrane</keyword>
<keyword id="KW-0479">Metal-binding</keyword>
<keyword id="KW-0560">Oxidoreductase</keyword>
<keyword id="KW-1278">Translocase</keyword>
<keyword id="KW-0812">Transmembrane</keyword>
<keyword id="KW-1133">Transmembrane helix</keyword>
<keyword id="KW-0813">Transport</keyword>
<gene>
    <name type="primary">cydA</name>
</gene>
<feature type="chain" id="PRO_0000183917" description="Cytochrome bd ubiquinol oxidase subunit 1">
    <location>
        <begin position="1"/>
        <end position="537"/>
    </location>
</feature>
<feature type="topological domain" description="Cytoplasmic" evidence="3">
    <location>
        <begin position="1"/>
        <end position="24"/>
    </location>
</feature>
<feature type="transmembrane region" description="Helical" evidence="3">
    <location>
        <begin position="25"/>
        <end position="44"/>
    </location>
</feature>
<feature type="topological domain" description="Periplasmic" evidence="3">
    <location>
        <begin position="45"/>
        <end position="96"/>
    </location>
</feature>
<feature type="transmembrane region" description="Helical" evidence="3">
    <location>
        <begin position="97"/>
        <end position="116"/>
    </location>
</feature>
<feature type="topological domain" description="Cytoplasmic" evidence="3">
    <location>
        <begin position="117"/>
        <end position="131"/>
    </location>
</feature>
<feature type="transmembrane region" description="Helical" evidence="3">
    <location>
        <begin position="132"/>
        <end position="151"/>
    </location>
</feature>
<feature type="topological domain" description="Periplasmic" evidence="3">
    <location>
        <begin position="152"/>
        <end position="189"/>
    </location>
</feature>
<feature type="transmembrane region" description="Helical" evidence="3">
    <location>
        <begin position="190"/>
        <end position="209"/>
    </location>
</feature>
<feature type="topological domain" description="Cytoplasmic" evidence="3">
    <location>
        <begin position="210"/>
        <end position="221"/>
    </location>
</feature>
<feature type="transmembrane region" description="Helical" evidence="3">
    <location>
        <begin position="222"/>
        <end position="241"/>
    </location>
</feature>
<feature type="topological domain" description="Periplasmic" evidence="3">
    <location>
        <begin position="242"/>
        <end position="394"/>
    </location>
</feature>
<feature type="transmembrane region" description="Helical" evidence="3">
    <location>
        <begin position="395"/>
        <end position="414"/>
    </location>
</feature>
<feature type="topological domain" description="Cytoplasmic" evidence="3">
    <location>
        <begin position="415"/>
        <end position="472"/>
    </location>
</feature>
<feature type="transmembrane region" description="Helical" evidence="3">
    <location>
        <begin position="473"/>
        <end position="492"/>
    </location>
</feature>
<feature type="topological domain" description="Periplasmic" evidence="3">
    <location>
        <begin position="493"/>
        <end position="537"/>
    </location>
</feature>
<feature type="binding site" description="axial binding residue" evidence="3">
    <location>
        <position position="21"/>
    </location>
    <ligand>
        <name>heme b</name>
        <dbReference type="ChEBI" id="CHEBI:60344"/>
        <label>b595</label>
    </ligand>
    <ligandPart>
        <name>Fe</name>
        <dbReference type="ChEBI" id="CHEBI:18248"/>
    </ligandPart>
</feature>
<feature type="binding site" description="axial binding residue" evidence="1">
    <location>
        <position position="188"/>
    </location>
    <ligand>
        <name>heme b</name>
        <dbReference type="ChEBI" id="CHEBI:60344"/>
        <label>b558</label>
    </ligand>
    <ligandPart>
        <name>Fe</name>
        <dbReference type="ChEBI" id="CHEBI:18248"/>
    </ligandPart>
</feature>
<feature type="binding site" description="axial binding residue" evidence="1">
    <location>
        <position position="395"/>
    </location>
    <ligand>
        <name>heme b</name>
        <dbReference type="ChEBI" id="CHEBI:60344"/>
        <label>b558</label>
    </ligand>
    <ligandPart>
        <name>Fe</name>
        <dbReference type="ChEBI" id="CHEBI:18248"/>
    </ligandPart>
</feature>
<comment type="function">
    <text evidence="4">May be involved in maintaining the low intracellular oxygen concentration required for nitrogen fixation.</text>
</comment>
<comment type="catalytic activity">
    <reaction evidence="2">
        <text>2 a ubiquinol + O2(in) + 4 H(+)(in) = 2 a ubiquinone + 2 H2O(in) + 4 H(+)(out)</text>
        <dbReference type="Rhea" id="RHEA:40527"/>
        <dbReference type="Rhea" id="RHEA-COMP:9565"/>
        <dbReference type="Rhea" id="RHEA-COMP:9566"/>
        <dbReference type="ChEBI" id="CHEBI:15377"/>
        <dbReference type="ChEBI" id="CHEBI:15378"/>
        <dbReference type="ChEBI" id="CHEBI:15379"/>
        <dbReference type="ChEBI" id="CHEBI:16389"/>
        <dbReference type="ChEBI" id="CHEBI:17976"/>
        <dbReference type="EC" id="7.1.1.7"/>
    </reaction>
</comment>
<comment type="cofactor">
    <cofactor evidence="2">
        <name>heme b</name>
        <dbReference type="ChEBI" id="CHEBI:60344"/>
    </cofactor>
    <text evidence="2">Binds 1 protoheme IX center (heme b558) per subunit.</text>
</comment>
<comment type="cofactor">
    <cofactor evidence="2">
        <name>heme b</name>
        <dbReference type="ChEBI" id="CHEBI:60344"/>
    </cofactor>
    <text evidence="2">Binds 1 protoheme IX center (heme b595) per heterodimer, in conjunction with CydB.</text>
</comment>
<comment type="cofactor">
    <cofactor evidence="2">
        <name>heme d cis-diol</name>
        <dbReference type="ChEBI" id="CHEBI:62814"/>
    </cofactor>
    <text evidence="2">Binds 1 iron-chlorin (heme d or cytochrome d) per heterodimer, in conjunction with CydB.</text>
</comment>
<comment type="subunit">
    <text evidence="2">Heterodimer of subunits I and II.</text>
</comment>
<comment type="subcellular location">
    <subcellularLocation>
        <location>Cell inner membrane</location>
        <topology>Multi-pass membrane protein</topology>
    </subcellularLocation>
</comment>
<comment type="similarity">
    <text evidence="5">Belongs to the cytochrome ubiquinol oxidase subunit 1 family.</text>
</comment>
<proteinExistence type="inferred from homology"/>
<organism>
    <name type="scientific">Azotobacter vinelandii</name>
    <dbReference type="NCBI Taxonomy" id="354"/>
    <lineage>
        <taxon>Bacteria</taxon>
        <taxon>Pseudomonadati</taxon>
        <taxon>Pseudomonadota</taxon>
        <taxon>Gammaproteobacteria</taxon>
        <taxon>Pseudomonadales</taxon>
        <taxon>Pseudomonadaceae</taxon>
        <taxon>Azotobacter</taxon>
    </lineage>
</organism>
<accession>Q09049</accession>
<name>CYDA_AZOVI</name>
<evidence type="ECO:0000250" key="1"/>
<evidence type="ECO:0000250" key="2">
    <source>
        <dbReference type="UniProtKB" id="P0ABJ9"/>
    </source>
</evidence>
<evidence type="ECO:0000255" key="3"/>
<evidence type="ECO:0000269" key="4">
    <source>
    </source>
</evidence>
<evidence type="ECO:0000305" key="5"/>
<sequence>MISESVVDLSRLQFAMTALYHFLFVPLTLGMTFLLAIMESVYVMTGKQVYKDMVKFWGKLFGINFALGVTTGITMEFQFGTNWAYYSHYVGDIFGAPLAIEGLTAFFLESTFIGMFFFGWDRLSKIQHLAVTWLVALGSNLSALWILVANGWMQHPVGAEFNFETMRMELVDFGALLLNPVAQVKFVHTVASGYVTGAVFVLAISSYYLLKKRDLGFARRSFAIASAFGMASILSVIVLGDESGYEVGEVQKAKLAAIEAEWETHPAPASFTLIGFPNEEEQRTDFAVKIPWVLGIIATRSLDEQVIGIKDLIADHEARIRNGMVRYGLLEELRAGNKSPEKIAAFNEVKDDLGYGLLLKKYTPNVVDASEEQIKQAAKDTIPSVASMFWSFRAMVGAGFAMLILFVCAFWASARKNEESKPWLLKFALYSLPLPWIATQTGWFVAEHGRQPWTIGGVLPTHLSASSLSTGDLWGSLIALIAFYTLLLVVEMYLMIRFARLGPSSLHTGRYHFEQLEQHAVKHASPSQADPQQPVNA</sequence>
<protein>
    <recommendedName>
        <fullName>Cytochrome bd ubiquinol oxidase subunit 1</fullName>
        <ecNumber evidence="2">7.1.1.7</ecNumber>
    </recommendedName>
    <alternativeName>
        <fullName>Cytochrome d ubiquinol oxidase subunit I</fullName>
    </alternativeName>
</protein>